<gene>
    <name type="primary">adkA</name>
    <name type="synonym">adk</name>
    <name type="ordered locus">MJ0479</name>
</gene>
<evidence type="ECO:0000250" key="1"/>
<evidence type="ECO:0000305" key="2"/>
<dbReference type="EC" id="2.7.4.3"/>
<dbReference type="EMBL" id="U39882">
    <property type="protein sequence ID" value="AAC44863.1"/>
    <property type="molecule type" value="Genomic_DNA"/>
</dbReference>
<dbReference type="EMBL" id="L77117">
    <property type="protein sequence ID" value="AAB98470.1"/>
    <property type="status" value="ALT_INIT"/>
    <property type="molecule type" value="Genomic_DNA"/>
</dbReference>
<dbReference type="PIR" id="G64359">
    <property type="entry name" value="G64359"/>
</dbReference>
<dbReference type="RefSeq" id="WP_064496506.1">
    <property type="nucleotide sequence ID" value="NC_000909.1"/>
</dbReference>
<dbReference type="SMR" id="P43409"/>
<dbReference type="FunCoup" id="P43409">
    <property type="interactions" value="132"/>
</dbReference>
<dbReference type="STRING" id="243232.MJ_0479"/>
<dbReference type="PaxDb" id="243232-MJ_0479"/>
<dbReference type="EnsemblBacteria" id="AAB98470">
    <property type="protein sequence ID" value="AAB98470"/>
    <property type="gene ID" value="MJ_0479"/>
</dbReference>
<dbReference type="GeneID" id="1451341"/>
<dbReference type="KEGG" id="mja:MJ_0479"/>
<dbReference type="eggNOG" id="arCOG01039">
    <property type="taxonomic scope" value="Archaea"/>
</dbReference>
<dbReference type="HOGENOM" id="CLU_119371_0_0_2"/>
<dbReference type="InParanoid" id="P43409"/>
<dbReference type="OrthoDB" id="26198at2157"/>
<dbReference type="PhylomeDB" id="P43409"/>
<dbReference type="BRENDA" id="2.7.4.3">
    <property type="organism ID" value="3260"/>
</dbReference>
<dbReference type="Proteomes" id="UP000000805">
    <property type="component" value="Chromosome"/>
</dbReference>
<dbReference type="GO" id="GO:0005737">
    <property type="term" value="C:cytoplasm"/>
    <property type="evidence" value="ECO:0007669"/>
    <property type="project" value="UniProtKB-SubCell"/>
</dbReference>
<dbReference type="GO" id="GO:0004017">
    <property type="term" value="F:adenylate kinase activity"/>
    <property type="evidence" value="ECO:0007669"/>
    <property type="project" value="UniProtKB-UniRule"/>
</dbReference>
<dbReference type="GO" id="GO:0005524">
    <property type="term" value="F:ATP binding"/>
    <property type="evidence" value="ECO:0007669"/>
    <property type="project" value="UniProtKB-UniRule"/>
</dbReference>
<dbReference type="Gene3D" id="3.40.50.300">
    <property type="entry name" value="P-loop containing nucleotide triphosphate hydrolases"/>
    <property type="match status" value="1"/>
</dbReference>
<dbReference type="HAMAP" id="MF_00234">
    <property type="entry name" value="Adenylate_kinase_AdkA"/>
    <property type="match status" value="1"/>
</dbReference>
<dbReference type="InterPro" id="IPR023477">
    <property type="entry name" value="Adenylate_kinase_AdkA"/>
</dbReference>
<dbReference type="InterPro" id="IPR027417">
    <property type="entry name" value="P-loop_NTPase"/>
</dbReference>
<dbReference type="NCBIfam" id="NF003122">
    <property type="entry name" value="PRK04040.1"/>
    <property type="match status" value="1"/>
</dbReference>
<dbReference type="Pfam" id="PF13207">
    <property type="entry name" value="AAA_17"/>
    <property type="match status" value="1"/>
</dbReference>
<dbReference type="SUPFAM" id="SSF52540">
    <property type="entry name" value="P-loop containing nucleoside triphosphate hydrolases"/>
    <property type="match status" value="1"/>
</dbReference>
<proteinExistence type="evidence at protein level"/>
<sequence length="192" mass="21772">MKNKVVVIVGVPGVGSTTVTNKAIEELKKEGIEYKIVNFGTVMFEIAKEEGLVEHRDQLRKLPPEEQKRIQKLAGKKIAEMAKEFNIVVDTHSTIKTPKGYLPGLPAWVLEELNPDIIVLVEAENDEILMRRLKDETRQRDFESTEDIGEHIFMNRCAAMTYAVLTGATVKIIKNRDFLLDKAVQELIEVLK</sequence>
<organism>
    <name type="scientific">Methanocaldococcus jannaschii (strain ATCC 43067 / DSM 2661 / JAL-1 / JCM 10045 / NBRC 100440)</name>
    <name type="common">Methanococcus jannaschii</name>
    <dbReference type="NCBI Taxonomy" id="243232"/>
    <lineage>
        <taxon>Archaea</taxon>
        <taxon>Methanobacteriati</taxon>
        <taxon>Methanobacteriota</taxon>
        <taxon>Methanomada group</taxon>
        <taxon>Methanococci</taxon>
        <taxon>Methanococcales</taxon>
        <taxon>Methanocaldococcaceae</taxon>
        <taxon>Methanocaldococcus</taxon>
    </lineage>
</organism>
<reference key="1">
    <citation type="journal article" date="1997" name="Gene">
        <title>The adenylate kinase genes of M. voltae, M. thermolithotrophicus, M. jannaschii, and M. igneus define a new family of adenylate kinases.</title>
        <authorList>
            <person name="Ferber D.M."/>
            <person name="Haney P.J."/>
            <person name="Berk H."/>
            <person name="Lynn D."/>
            <person name="Konisky J."/>
        </authorList>
    </citation>
    <scope>NUCLEOTIDE SEQUENCE [GENOMIC DNA]</scope>
</reference>
<reference key="2">
    <citation type="journal article" date="1996" name="Science">
        <title>Complete genome sequence of the methanogenic archaeon, Methanococcus jannaschii.</title>
        <authorList>
            <person name="Bult C.J."/>
            <person name="White O."/>
            <person name="Olsen G.J."/>
            <person name="Zhou L."/>
            <person name="Fleischmann R.D."/>
            <person name="Sutton G.G."/>
            <person name="Blake J.A."/>
            <person name="FitzGerald L.M."/>
            <person name="Clayton R.A."/>
            <person name="Gocayne J.D."/>
            <person name="Kerlavage A.R."/>
            <person name="Dougherty B.A."/>
            <person name="Tomb J.-F."/>
            <person name="Adams M.D."/>
            <person name="Reich C.I."/>
            <person name="Overbeek R."/>
            <person name="Kirkness E.F."/>
            <person name="Weinstock K.G."/>
            <person name="Merrick J.M."/>
            <person name="Glodek A."/>
            <person name="Scott J.L."/>
            <person name="Geoghagen N.S.M."/>
            <person name="Weidman J.F."/>
            <person name="Fuhrmann J.L."/>
            <person name="Nguyen D."/>
            <person name="Utterback T.R."/>
            <person name="Kelley J.M."/>
            <person name="Peterson J.D."/>
            <person name="Sadow P.W."/>
            <person name="Hanna M.C."/>
            <person name="Cotton M.D."/>
            <person name="Roberts K.M."/>
            <person name="Hurst M.A."/>
            <person name="Kaine B.P."/>
            <person name="Borodovsky M."/>
            <person name="Klenk H.-P."/>
            <person name="Fraser C.M."/>
            <person name="Smith H.O."/>
            <person name="Woese C.R."/>
            <person name="Venter J.C."/>
        </authorList>
    </citation>
    <scope>NUCLEOTIDE SEQUENCE [LARGE SCALE GENOMIC DNA]</scope>
    <source>
        <strain>ATCC 43067 / DSM 2661 / JAL-1 / JCM 10045 / NBRC 100440</strain>
    </source>
</reference>
<reference key="3">
    <citation type="journal article" date="1995" name="J. Bacteriol.">
        <title>The adenylate kinases from a mesophilic and three thermophilic methanogenic members of the Archaea.</title>
        <authorList>
            <person name="Rusnak P."/>
            <person name="Haney P."/>
            <person name="Konisky J."/>
        </authorList>
    </citation>
    <scope>PROTEIN SEQUENCE OF 1-30</scope>
</reference>
<keyword id="KW-0067">ATP-binding</keyword>
<keyword id="KW-0963">Cytoplasm</keyword>
<keyword id="KW-0903">Direct protein sequencing</keyword>
<keyword id="KW-0418">Kinase</keyword>
<keyword id="KW-0547">Nucleotide-binding</keyword>
<keyword id="KW-1185">Reference proteome</keyword>
<keyword id="KW-0808">Transferase</keyword>
<accession>P43409</accession>
<protein>
    <recommendedName>
        <fullName>Adenylate kinase</fullName>
        <shortName>AK</shortName>
        <ecNumber>2.7.4.3</ecNumber>
    </recommendedName>
    <alternativeName>
        <fullName>ATP-AMP transphosphorylase</fullName>
    </alternativeName>
</protein>
<name>KADA_METJA</name>
<comment type="catalytic activity">
    <reaction>
        <text>AMP + ATP = 2 ADP</text>
        <dbReference type="Rhea" id="RHEA:12973"/>
        <dbReference type="ChEBI" id="CHEBI:30616"/>
        <dbReference type="ChEBI" id="CHEBI:456215"/>
        <dbReference type="ChEBI" id="CHEBI:456216"/>
        <dbReference type="EC" id="2.7.4.3"/>
    </reaction>
</comment>
<comment type="biophysicochemical properties">
    <temperatureDependence>
        <text>Active from 70 to 90 degrees Celsius.</text>
    </temperatureDependence>
</comment>
<comment type="subunit">
    <text evidence="2">Monomer.</text>
</comment>
<comment type="subcellular location">
    <subcellularLocation>
        <location>Cytoplasm</location>
    </subcellularLocation>
</comment>
<comment type="similarity">
    <text evidence="2">Belongs to the archaeal adenylate kinase family.</text>
</comment>
<comment type="sequence caution" evidence="2">
    <conflict type="erroneous initiation">
        <sequence resource="EMBL-CDS" id="AAB98470"/>
    </conflict>
</comment>
<feature type="chain" id="PRO_0000131814" description="Adenylate kinase">
    <location>
        <begin position="1"/>
        <end position="192"/>
    </location>
</feature>
<feature type="binding site" evidence="1">
    <location>
        <begin position="10"/>
        <end position="18"/>
    </location>
    <ligand>
        <name>ATP</name>
        <dbReference type="ChEBI" id="CHEBI:30616"/>
    </ligand>
</feature>
<feature type="sequence conflict" description="In Ref. 3; AA sequence." evidence="2" ref="3">
    <original>S</original>
    <variation>G</variation>
    <location>
        <position position="16"/>
    </location>
</feature>